<sequence>MNSIWKQYIDILQGVVKPALGCTEPICAAYAASVATQMLGSKPETIDVFVSDNLYKNSMGVFVPRTGRVGLAIAAATGAIGGNPDAGLEVLAKITEEEVNEAQSLIDNGCVVVQRETTDEFIYCRVIAKNALHSAEVTISGGHTLIIEKRLDGNIIFTLDSSLPKTSTASICDGVDITISSIYDFATQAEFDDIKFILEAKELNIALAQEGLNNPYGLEVGRTYQKNIEKGLLAKSLDSDILIYTSAASDARMGGATLPAMSNYGSGNQGIAATIPVVKMADFFNADDEKLARAFIMSHLGAIYIKSHYPPLSAFCGNAVTSAAASMAMVYLAGGTFEQSCSAIQNTISDTSGMICDGAKSTCAMKVGSSAQSAMKSALLALNDHCVTKQGVIADDVEKTIKNIGRMITTGMPNIDHEIIEIMAS</sequence>
<evidence type="ECO:0000255" key="1">
    <source>
        <dbReference type="HAMAP-Rule" id="MF_01845"/>
    </source>
</evidence>
<dbReference type="EMBL" id="CP001139">
    <property type="protein sequence ID" value="ACH65890.1"/>
    <property type="molecule type" value="Genomic_DNA"/>
</dbReference>
<dbReference type="RefSeq" id="WP_012533349.1">
    <property type="nucleotide sequence ID" value="NC_011184.1"/>
</dbReference>
<dbReference type="SMR" id="B5FAY4"/>
<dbReference type="KEGG" id="vfm:VFMJ11_0655"/>
<dbReference type="HOGENOM" id="CLU_051840_0_0_6"/>
<dbReference type="Proteomes" id="UP000001857">
    <property type="component" value="Chromosome I"/>
</dbReference>
<dbReference type="GO" id="GO:0080146">
    <property type="term" value="F:L-cysteine desulfhydrase activity"/>
    <property type="evidence" value="ECO:0007669"/>
    <property type="project" value="TreeGrafter"/>
</dbReference>
<dbReference type="GO" id="GO:0019450">
    <property type="term" value="P:L-cysteine catabolic process to pyruvate"/>
    <property type="evidence" value="ECO:0007669"/>
    <property type="project" value="TreeGrafter"/>
</dbReference>
<dbReference type="HAMAP" id="MF_01845">
    <property type="entry name" value="UPF0597"/>
    <property type="match status" value="1"/>
</dbReference>
<dbReference type="InterPro" id="IPR005130">
    <property type="entry name" value="Ser_deHydtase-like_asu"/>
</dbReference>
<dbReference type="InterPro" id="IPR021144">
    <property type="entry name" value="UPF0597"/>
</dbReference>
<dbReference type="PANTHER" id="PTHR30501">
    <property type="entry name" value="UPF0597 PROTEIN YHAM"/>
    <property type="match status" value="1"/>
</dbReference>
<dbReference type="PANTHER" id="PTHR30501:SF2">
    <property type="entry name" value="UPF0597 PROTEIN YHAM"/>
    <property type="match status" value="1"/>
</dbReference>
<dbReference type="Pfam" id="PF03313">
    <property type="entry name" value="SDH_alpha"/>
    <property type="match status" value="1"/>
</dbReference>
<dbReference type="PIRSF" id="PIRSF006054">
    <property type="entry name" value="UCP006054"/>
    <property type="match status" value="1"/>
</dbReference>
<feature type="chain" id="PRO_1000188475" description="UPF0597 protein VFMJ11_0655">
    <location>
        <begin position="1"/>
        <end position="425"/>
    </location>
</feature>
<protein>
    <recommendedName>
        <fullName evidence="1">UPF0597 protein VFMJ11_0655</fullName>
    </recommendedName>
</protein>
<name>Y655_ALIFM</name>
<gene>
    <name type="ordered locus">VFMJ11_0655</name>
</gene>
<proteinExistence type="inferred from homology"/>
<organism>
    <name type="scientific">Aliivibrio fischeri (strain MJ11)</name>
    <name type="common">Vibrio fischeri</name>
    <dbReference type="NCBI Taxonomy" id="388396"/>
    <lineage>
        <taxon>Bacteria</taxon>
        <taxon>Pseudomonadati</taxon>
        <taxon>Pseudomonadota</taxon>
        <taxon>Gammaproteobacteria</taxon>
        <taxon>Vibrionales</taxon>
        <taxon>Vibrionaceae</taxon>
        <taxon>Aliivibrio</taxon>
    </lineage>
</organism>
<reference key="1">
    <citation type="submission" date="2008-08" db="EMBL/GenBank/DDBJ databases">
        <title>Complete sequence of Vibrio fischeri strain MJ11.</title>
        <authorList>
            <person name="Mandel M.J."/>
            <person name="Stabb E.V."/>
            <person name="Ruby E.G."/>
            <person name="Ferriera S."/>
            <person name="Johnson J."/>
            <person name="Kravitz S."/>
            <person name="Beeson K."/>
            <person name="Sutton G."/>
            <person name="Rogers Y.-H."/>
            <person name="Friedman R."/>
            <person name="Frazier M."/>
            <person name="Venter J.C."/>
        </authorList>
    </citation>
    <scope>NUCLEOTIDE SEQUENCE [LARGE SCALE GENOMIC DNA]</scope>
    <source>
        <strain>MJ11</strain>
    </source>
</reference>
<accession>B5FAY4</accession>
<comment type="similarity">
    <text evidence="1">Belongs to the UPF0597 family.</text>
</comment>